<name>EFG_THIDL</name>
<proteinExistence type="inferred from homology"/>
<reference key="1">
    <citation type="submission" date="1996-11" db="EMBL/GenBank/DDBJ databases">
        <title>The str operon from the chemolithotrophic bacterium Thiobacillus cuprinus.</title>
        <authorList>
            <person name="Moreira D."/>
            <person name="Amils R."/>
        </authorList>
    </citation>
    <scope>NUCLEOTIDE SEQUENCE [GENOMIC DNA]</scope>
    <source>
        <strain>DSM 5495 / NBRC 102094 / Hoe5</strain>
    </source>
</reference>
<evidence type="ECO:0000250" key="1"/>
<evidence type="ECO:0000305" key="2"/>
<dbReference type="EMBL" id="U78300">
    <property type="protein sequence ID" value="AAB87733.1"/>
    <property type="molecule type" value="Genomic_DNA"/>
</dbReference>
<dbReference type="SMR" id="O50565"/>
<dbReference type="GO" id="GO:0005737">
    <property type="term" value="C:cytoplasm"/>
    <property type="evidence" value="ECO:0007669"/>
    <property type="project" value="UniProtKB-SubCell"/>
</dbReference>
<dbReference type="GO" id="GO:0005525">
    <property type="term" value="F:GTP binding"/>
    <property type="evidence" value="ECO:0007669"/>
    <property type="project" value="UniProtKB-UniRule"/>
</dbReference>
<dbReference type="GO" id="GO:0003924">
    <property type="term" value="F:GTPase activity"/>
    <property type="evidence" value="ECO:0007669"/>
    <property type="project" value="InterPro"/>
</dbReference>
<dbReference type="GO" id="GO:0097216">
    <property type="term" value="F:guanosine tetraphosphate binding"/>
    <property type="evidence" value="ECO:0007669"/>
    <property type="project" value="UniProtKB-ARBA"/>
</dbReference>
<dbReference type="GO" id="GO:0003746">
    <property type="term" value="F:translation elongation factor activity"/>
    <property type="evidence" value="ECO:0007669"/>
    <property type="project" value="UniProtKB-UniRule"/>
</dbReference>
<dbReference type="GO" id="GO:0032790">
    <property type="term" value="P:ribosome disassembly"/>
    <property type="evidence" value="ECO:0007669"/>
    <property type="project" value="TreeGrafter"/>
</dbReference>
<dbReference type="CDD" id="cd01886">
    <property type="entry name" value="EF-G"/>
    <property type="match status" value="1"/>
</dbReference>
<dbReference type="CDD" id="cd16262">
    <property type="entry name" value="EFG_III"/>
    <property type="match status" value="1"/>
</dbReference>
<dbReference type="CDD" id="cd01434">
    <property type="entry name" value="EFG_mtEFG1_IV"/>
    <property type="match status" value="1"/>
</dbReference>
<dbReference type="CDD" id="cd03713">
    <property type="entry name" value="EFG_mtEFG_C"/>
    <property type="match status" value="1"/>
</dbReference>
<dbReference type="CDD" id="cd04088">
    <property type="entry name" value="EFG_mtEFG_II"/>
    <property type="match status" value="1"/>
</dbReference>
<dbReference type="FunFam" id="2.40.30.10:FF:000006">
    <property type="entry name" value="Elongation factor G"/>
    <property type="match status" value="1"/>
</dbReference>
<dbReference type="FunFam" id="3.30.230.10:FF:000003">
    <property type="entry name" value="Elongation factor G"/>
    <property type="match status" value="1"/>
</dbReference>
<dbReference type="FunFam" id="3.30.70.240:FF:000001">
    <property type="entry name" value="Elongation factor G"/>
    <property type="match status" value="1"/>
</dbReference>
<dbReference type="FunFam" id="3.30.70.870:FF:000001">
    <property type="entry name" value="Elongation factor G"/>
    <property type="match status" value="1"/>
</dbReference>
<dbReference type="FunFam" id="3.40.50.300:FF:000029">
    <property type="entry name" value="Elongation factor G"/>
    <property type="match status" value="1"/>
</dbReference>
<dbReference type="Gene3D" id="3.30.230.10">
    <property type="match status" value="1"/>
</dbReference>
<dbReference type="Gene3D" id="3.30.70.240">
    <property type="match status" value="1"/>
</dbReference>
<dbReference type="Gene3D" id="3.30.70.870">
    <property type="entry name" value="Elongation Factor G (Translational Gtpase), domain 3"/>
    <property type="match status" value="1"/>
</dbReference>
<dbReference type="Gene3D" id="3.40.50.300">
    <property type="entry name" value="P-loop containing nucleotide triphosphate hydrolases"/>
    <property type="match status" value="2"/>
</dbReference>
<dbReference type="HAMAP" id="MF_00054_B">
    <property type="entry name" value="EF_G_EF_2_B"/>
    <property type="match status" value="1"/>
</dbReference>
<dbReference type="InterPro" id="IPR041095">
    <property type="entry name" value="EFG_II"/>
</dbReference>
<dbReference type="InterPro" id="IPR009022">
    <property type="entry name" value="EFG_III"/>
</dbReference>
<dbReference type="InterPro" id="IPR035647">
    <property type="entry name" value="EFG_III/V"/>
</dbReference>
<dbReference type="InterPro" id="IPR047872">
    <property type="entry name" value="EFG_IV"/>
</dbReference>
<dbReference type="InterPro" id="IPR035649">
    <property type="entry name" value="EFG_V"/>
</dbReference>
<dbReference type="InterPro" id="IPR000640">
    <property type="entry name" value="EFG_V-like"/>
</dbReference>
<dbReference type="InterPro" id="IPR004161">
    <property type="entry name" value="EFTu-like_2"/>
</dbReference>
<dbReference type="InterPro" id="IPR031157">
    <property type="entry name" value="G_TR_CS"/>
</dbReference>
<dbReference type="InterPro" id="IPR027417">
    <property type="entry name" value="P-loop_NTPase"/>
</dbReference>
<dbReference type="InterPro" id="IPR020568">
    <property type="entry name" value="Ribosomal_Su5_D2-typ_SF"/>
</dbReference>
<dbReference type="InterPro" id="IPR014721">
    <property type="entry name" value="Ribsml_uS5_D2-typ_fold_subgr"/>
</dbReference>
<dbReference type="InterPro" id="IPR005225">
    <property type="entry name" value="Small_GTP-bd"/>
</dbReference>
<dbReference type="InterPro" id="IPR000795">
    <property type="entry name" value="T_Tr_GTP-bd_dom"/>
</dbReference>
<dbReference type="InterPro" id="IPR009000">
    <property type="entry name" value="Transl_B-barrel_sf"/>
</dbReference>
<dbReference type="InterPro" id="IPR004540">
    <property type="entry name" value="Transl_elong_EFG/EF2"/>
</dbReference>
<dbReference type="InterPro" id="IPR005517">
    <property type="entry name" value="Transl_elong_EFG/EF2_IV"/>
</dbReference>
<dbReference type="NCBIfam" id="TIGR00484">
    <property type="entry name" value="EF-G"/>
    <property type="match status" value="1"/>
</dbReference>
<dbReference type="NCBIfam" id="NF009381">
    <property type="entry name" value="PRK12740.1-5"/>
    <property type="match status" value="1"/>
</dbReference>
<dbReference type="NCBIfam" id="TIGR00231">
    <property type="entry name" value="small_GTP"/>
    <property type="match status" value="1"/>
</dbReference>
<dbReference type="PANTHER" id="PTHR43261:SF1">
    <property type="entry name" value="RIBOSOME-RELEASING FACTOR 2, MITOCHONDRIAL"/>
    <property type="match status" value="1"/>
</dbReference>
<dbReference type="PANTHER" id="PTHR43261">
    <property type="entry name" value="TRANSLATION ELONGATION FACTOR G-RELATED"/>
    <property type="match status" value="1"/>
</dbReference>
<dbReference type="Pfam" id="PF00679">
    <property type="entry name" value="EFG_C"/>
    <property type="match status" value="1"/>
</dbReference>
<dbReference type="Pfam" id="PF14492">
    <property type="entry name" value="EFG_III"/>
    <property type="match status" value="1"/>
</dbReference>
<dbReference type="Pfam" id="PF03764">
    <property type="entry name" value="EFG_IV"/>
    <property type="match status" value="1"/>
</dbReference>
<dbReference type="Pfam" id="PF00009">
    <property type="entry name" value="GTP_EFTU"/>
    <property type="match status" value="1"/>
</dbReference>
<dbReference type="Pfam" id="PF03144">
    <property type="entry name" value="GTP_EFTU_D2"/>
    <property type="match status" value="1"/>
</dbReference>
<dbReference type="PRINTS" id="PR00315">
    <property type="entry name" value="ELONGATNFCT"/>
</dbReference>
<dbReference type="SMART" id="SM00838">
    <property type="entry name" value="EFG_C"/>
    <property type="match status" value="1"/>
</dbReference>
<dbReference type="SMART" id="SM00889">
    <property type="entry name" value="EFG_IV"/>
    <property type="match status" value="1"/>
</dbReference>
<dbReference type="SUPFAM" id="SSF54980">
    <property type="entry name" value="EF-G C-terminal domain-like"/>
    <property type="match status" value="2"/>
</dbReference>
<dbReference type="SUPFAM" id="SSF52540">
    <property type="entry name" value="P-loop containing nucleoside triphosphate hydrolases"/>
    <property type="match status" value="1"/>
</dbReference>
<dbReference type="SUPFAM" id="SSF54211">
    <property type="entry name" value="Ribosomal protein S5 domain 2-like"/>
    <property type="match status" value="1"/>
</dbReference>
<dbReference type="SUPFAM" id="SSF50447">
    <property type="entry name" value="Translation proteins"/>
    <property type="match status" value="1"/>
</dbReference>
<dbReference type="PROSITE" id="PS00301">
    <property type="entry name" value="G_TR_1"/>
    <property type="match status" value="1"/>
</dbReference>
<dbReference type="PROSITE" id="PS51722">
    <property type="entry name" value="G_TR_2"/>
    <property type="match status" value="1"/>
</dbReference>
<organism>
    <name type="scientific">Thiomonas delicata</name>
    <name type="common">Thiomonas cuprina</name>
    <dbReference type="NCBI Taxonomy" id="364030"/>
    <lineage>
        <taxon>Bacteria</taxon>
        <taxon>Pseudomonadati</taxon>
        <taxon>Pseudomonadota</taxon>
        <taxon>Betaproteobacteria</taxon>
        <taxon>Burkholderiales</taxon>
        <taxon>Thiomonas</taxon>
    </lineage>
</organism>
<sequence length="702" mass="78147">MARKTPIERYRNIGISAHIDAGKTTTTERILFYTGVNHKIGEVHDGAATMDWMEQEQERGITITSAATTCFWKGMDLSLPEHRINIIDTPGHVDFTIEVERSMRVLDGACMVYCAVGGVQPQSETVWRQANKYKVPRLAFVNKMDRTGANFFKTTSQMEGRLGQPVPVVFPIGAEENFRGVIDLLKMKAIIWDEASQGMKFEYQDPAELLSDAEKWRSAMVEAAAEANEELMNRYLESGELSEEEIKAWLEKRVLNAEQILAYALRTAFKNKGVQAMLAVIDFLPSPVDIPPCNGTDDNEHDTVRRASDDEKFSALAFKLMTDPYVGQLTFIRVYSGILQSGDTVYNPIKGKKERIGRFVQMHANQRDEIKEVRAGDIAPAIGLREITTGETLCDPESIITLEKMVFPEPVISQAVEPKTKADQEKMGIALQRVAQEDPSFRVKTDEESGQTIISGMGELHLEILVDRMKREFGVEANVGKPQVAYRETIRKTVDDVDGKQAKHSGGRGHYGHVVIAMYRLDRESKPKGYDCMNDIKGGVSPGEYIPPVDNGIHEQLNSGVLAGYPVVDVKVTLHFGSYHEVDSSEQAFKMAASIGFKEGCRKANPVILEPMMAVEVETPEDYAGNVMGDLSSRRGMVQGMDEIVTGGKVIRAEVPLSEMFGYSTTLRSMSQGRATYSMEFKHYAEAPRNVAERSSARVQGK</sequence>
<gene>
    <name type="primary">fusA</name>
    <name type="synonym">fus</name>
</gene>
<comment type="function">
    <text evidence="1">Catalyzes the GTP-dependent ribosomal translocation step during translation elongation. During this step, the ribosome changes from the pre-translocational (PRE) to the post-translocational (POST) state as the newly formed A-site-bound peptidyl-tRNA and P-site-bound deacylated tRNA move to the P and E sites, respectively. Catalyzes the coordinated movement of the two tRNA molecules, the mRNA and conformational changes in the ribosome (By similarity).</text>
</comment>
<comment type="subcellular location">
    <subcellularLocation>
        <location evidence="1">Cytoplasm</location>
    </subcellularLocation>
</comment>
<comment type="similarity">
    <text evidence="2">Belongs to the TRAFAC class translation factor GTPase superfamily. Classic translation factor GTPase family. EF-G/EF-2 subfamily.</text>
</comment>
<keyword id="KW-0963">Cytoplasm</keyword>
<keyword id="KW-0251">Elongation factor</keyword>
<keyword id="KW-0342">GTP-binding</keyword>
<keyword id="KW-0547">Nucleotide-binding</keyword>
<keyword id="KW-0648">Protein biosynthesis</keyword>
<protein>
    <recommendedName>
        <fullName>Elongation factor G</fullName>
        <shortName>EF-G</shortName>
    </recommendedName>
</protein>
<feature type="chain" id="PRO_0000091251" description="Elongation factor G">
    <location>
        <begin position="1"/>
        <end position="702"/>
    </location>
</feature>
<feature type="domain" description="tr-type G">
    <location>
        <begin position="8"/>
        <end position="196"/>
    </location>
</feature>
<feature type="binding site" evidence="1">
    <location>
        <begin position="17"/>
        <end position="24"/>
    </location>
    <ligand>
        <name>GTP</name>
        <dbReference type="ChEBI" id="CHEBI:37565"/>
    </ligand>
</feature>
<feature type="binding site" evidence="1">
    <location>
        <begin position="88"/>
        <end position="92"/>
    </location>
    <ligand>
        <name>GTP</name>
        <dbReference type="ChEBI" id="CHEBI:37565"/>
    </ligand>
</feature>
<feature type="binding site" evidence="1">
    <location>
        <begin position="142"/>
        <end position="145"/>
    </location>
    <ligand>
        <name>GTP</name>
        <dbReference type="ChEBI" id="CHEBI:37565"/>
    </ligand>
</feature>
<accession>O50565</accession>